<dbReference type="EMBL" id="AF384022">
    <property type="protein sequence ID" value="AAM49067.1"/>
    <property type="molecule type" value="Genomic_DNA"/>
</dbReference>
<dbReference type="EMBL" id="AF384023">
    <property type="protein sequence ID" value="AAM49069.1"/>
    <property type="molecule type" value="Genomic_DNA"/>
</dbReference>
<dbReference type="EMBL" id="AF384024">
    <property type="protein sequence ID" value="AAM49071.1"/>
    <property type="molecule type" value="Genomic_DNA"/>
</dbReference>
<dbReference type="EMBL" id="AF492350">
    <property type="protein sequence ID" value="AAQ06585.1"/>
    <property type="molecule type" value="Genomic_DNA"/>
</dbReference>
<dbReference type="EMBL" id="AY126697">
    <property type="protein sequence ID" value="AAM95735.1"/>
    <property type="molecule type" value="Genomic_DNA"/>
</dbReference>
<dbReference type="RefSeq" id="YP_052702.1">
    <property type="nucleotide sequence ID" value="NC_005971.1"/>
</dbReference>
<dbReference type="SMR" id="Q8LTZ5"/>
<dbReference type="GeneID" id="2885970"/>
<dbReference type="KEGG" id="biu:2885970"/>
<dbReference type="CTD" id="4508"/>
<dbReference type="OrthoDB" id="15721at91561"/>
<dbReference type="Proteomes" id="UP000515132">
    <property type="component" value="Mitochondrion MT"/>
</dbReference>
<dbReference type="GO" id="GO:0005743">
    <property type="term" value="C:mitochondrial inner membrane"/>
    <property type="evidence" value="ECO:0007669"/>
    <property type="project" value="UniProtKB-SubCell"/>
</dbReference>
<dbReference type="GO" id="GO:0045259">
    <property type="term" value="C:proton-transporting ATP synthase complex"/>
    <property type="evidence" value="ECO:0000250"/>
    <property type="project" value="UniProtKB"/>
</dbReference>
<dbReference type="GO" id="GO:0015252">
    <property type="term" value="F:proton channel activity"/>
    <property type="evidence" value="ECO:0000250"/>
    <property type="project" value="UniProtKB"/>
</dbReference>
<dbReference type="GO" id="GO:0046933">
    <property type="term" value="F:proton-transporting ATP synthase activity, rotational mechanism"/>
    <property type="evidence" value="ECO:0007669"/>
    <property type="project" value="TreeGrafter"/>
</dbReference>
<dbReference type="GO" id="GO:0015986">
    <property type="term" value="P:proton motive force-driven ATP synthesis"/>
    <property type="evidence" value="ECO:0000250"/>
    <property type="project" value="UniProtKB"/>
</dbReference>
<dbReference type="GO" id="GO:1902600">
    <property type="term" value="P:proton transmembrane transport"/>
    <property type="evidence" value="ECO:0000250"/>
    <property type="project" value="UniProtKB"/>
</dbReference>
<dbReference type="CDD" id="cd00310">
    <property type="entry name" value="ATP-synt_Fo_a_6"/>
    <property type="match status" value="1"/>
</dbReference>
<dbReference type="FunFam" id="1.20.120.220:FF:000004">
    <property type="entry name" value="ATP synthase subunit a"/>
    <property type="match status" value="1"/>
</dbReference>
<dbReference type="Gene3D" id="1.20.120.220">
    <property type="entry name" value="ATP synthase, F0 complex, subunit A"/>
    <property type="match status" value="1"/>
</dbReference>
<dbReference type="InterPro" id="IPR000568">
    <property type="entry name" value="ATP_synth_F0_asu"/>
</dbReference>
<dbReference type="InterPro" id="IPR023011">
    <property type="entry name" value="ATP_synth_F0_asu_AS"/>
</dbReference>
<dbReference type="InterPro" id="IPR045083">
    <property type="entry name" value="ATP_synth_F0_asu_bact/mt"/>
</dbReference>
<dbReference type="InterPro" id="IPR035908">
    <property type="entry name" value="F0_ATP_A_sf"/>
</dbReference>
<dbReference type="NCBIfam" id="TIGR01131">
    <property type="entry name" value="ATP_synt_6_or_A"/>
    <property type="match status" value="1"/>
</dbReference>
<dbReference type="PANTHER" id="PTHR11410">
    <property type="entry name" value="ATP SYNTHASE SUBUNIT A"/>
    <property type="match status" value="1"/>
</dbReference>
<dbReference type="PANTHER" id="PTHR11410:SF0">
    <property type="entry name" value="ATP SYNTHASE SUBUNIT A"/>
    <property type="match status" value="1"/>
</dbReference>
<dbReference type="Pfam" id="PF00119">
    <property type="entry name" value="ATP-synt_A"/>
    <property type="match status" value="1"/>
</dbReference>
<dbReference type="PRINTS" id="PR00123">
    <property type="entry name" value="ATPASEA"/>
</dbReference>
<dbReference type="SUPFAM" id="SSF81336">
    <property type="entry name" value="F1F0 ATP synthase subunit A"/>
    <property type="match status" value="1"/>
</dbReference>
<dbReference type="PROSITE" id="PS00449">
    <property type="entry name" value="ATPASE_A"/>
    <property type="match status" value="1"/>
</dbReference>
<sequence length="226" mass="24696">MNENLFASFITPVILGLPLVTLIVLFPSLLFPTSNRLVSNRFVTLQQWMLQLVSKQMMSIHNSKGQTWALMLMSLILFIGSTNLLGLLPHSFTPTTQLSMNLGMAIPLWAGAVITGFRNKTKASLAHFLPQGTPTPLIPMLVIIETISLFIQPVALAVRLTANITAGHLLIHLIGGATLALMSISTTTALITFTILILLTILEFAVAMIQAYVFTLLVSLYLHDNT</sequence>
<gene>
    <name evidence="1" type="primary">MT-ATP6</name>
    <name type="synonym">ATP6</name>
    <name type="synonym">ATPASE6</name>
    <name type="synonym">MTATP6</name>
</gene>
<name>ATP6_BOSIN</name>
<geneLocation type="mitochondrion"/>
<comment type="function">
    <text evidence="1">Subunit a, of the mitochondrial membrane ATP synthase complex (F(1)F(0) ATP synthase or Complex V) that produces ATP from ADP in the presence of a proton gradient across the membrane which is generated by electron transport complexes of the respiratory chain. ATP synthase complex consist of a soluble F(1) head domain - the catalytic core - and a membrane F(1) domain - the membrane proton channel. These two domains are linked by a central stalk rotating inside the F(1) region and a stationary peripheral stalk. During catalysis, ATP synthesis in the catalytic domain of F(1) is coupled via a rotary mechanism of the central stalk subunits to proton translocation. With the subunit c (ATP5MC1), forms the proton-conducting channel in the F(0) domain, that contains two crucial half-channels (inlet and outlet) that facilitate proton movement from the mitochondrial intermembrane space (IMS) into the matrix. Protons are taken up via the inlet half-channel and released through the outlet half-channel, following a Grotthuss mechanism.</text>
</comment>
<comment type="catalytic activity">
    <reaction evidence="1">
        <text>H(+)(in) = H(+)(out)</text>
        <dbReference type="Rhea" id="RHEA:34979"/>
        <dbReference type="ChEBI" id="CHEBI:15378"/>
    </reaction>
</comment>
<comment type="subunit">
    <text evidence="1">Component of the ATP synthase complex composed at least of ATP5F1A/subunit alpha, ATP5F1B/subunit beta, ATP5MC1/subunit c (homooctomer), MT-ATP6/subunit a, MT-ATP8/subunit 8, ATP5ME/subunit e, ATP5MF/subunit f, ATP5MG/subunit g, ATP5MK/subunit k, ATP5MJ/subunit j, ATP5F1C/subunit gamma, ATP5F1D/subunit delta, ATP5F1E/subunit epsilon, ATP5PF/subunit F6, ATP5PB/subunit b, ATP5PD/subunit d, ATP5PO/subunit OSCP. ATP synthase complex consists of a soluble F(1) head domain (subunits alpha(3) and beta(3)) - the catalytic core - and a membrane F(0) domain - the membrane proton channel (subunits c, a, 8, e, f, g, k and j). These two domains are linked by a central stalk (subunits gamma, delta, and epsilon) rotating inside the F1 region and a stationary peripheral stalk (subunits F6, b, d, and OSCP). Interacts with DNAJC30; interaction is direct.</text>
</comment>
<comment type="subcellular location">
    <subcellularLocation>
        <location>Mitochondrion inner membrane</location>
        <topology>Multi-pass membrane protein</topology>
    </subcellularLocation>
</comment>
<comment type="similarity">
    <text evidence="3">Belongs to the ATPase A chain family.</text>
</comment>
<keyword id="KW-0066">ATP synthesis</keyword>
<keyword id="KW-0138">CF(0)</keyword>
<keyword id="KW-0375">Hydrogen ion transport</keyword>
<keyword id="KW-0406">Ion transport</keyword>
<keyword id="KW-0472">Membrane</keyword>
<keyword id="KW-0496">Mitochondrion</keyword>
<keyword id="KW-0999">Mitochondrion inner membrane</keyword>
<keyword id="KW-1185">Reference proteome</keyword>
<keyword id="KW-0812">Transmembrane</keyword>
<keyword id="KW-1133">Transmembrane helix</keyword>
<keyword id="KW-0813">Transport</keyword>
<protein>
    <recommendedName>
        <fullName evidence="1">ATP synthase F(0) complex subunit a</fullName>
    </recommendedName>
    <alternativeName>
        <fullName>F-ATPase protein 6</fullName>
    </alternativeName>
    <alternativeName>
        <fullName evidence="1">Proton-conducting channel, ATP synthase F(0) complex subunit a</fullName>
    </alternativeName>
</protein>
<accession>Q8LTZ5</accession>
<proteinExistence type="inferred from homology"/>
<organism>
    <name type="scientific">Bos indicus</name>
    <name type="common">Zebu</name>
    <dbReference type="NCBI Taxonomy" id="9915"/>
    <lineage>
        <taxon>Eukaryota</taxon>
        <taxon>Metazoa</taxon>
        <taxon>Chordata</taxon>
        <taxon>Craniata</taxon>
        <taxon>Vertebrata</taxon>
        <taxon>Euteleostomi</taxon>
        <taxon>Mammalia</taxon>
        <taxon>Eutheria</taxon>
        <taxon>Laurasiatheria</taxon>
        <taxon>Artiodactyla</taxon>
        <taxon>Ruminantia</taxon>
        <taxon>Pecora</taxon>
        <taxon>Bovidae</taxon>
        <taxon>Bovinae</taxon>
        <taxon>Bos</taxon>
    </lineage>
</organism>
<evidence type="ECO:0000250" key="1">
    <source>
        <dbReference type="UniProtKB" id="P00846"/>
    </source>
</evidence>
<evidence type="ECO:0000255" key="2"/>
<evidence type="ECO:0000305" key="3"/>
<feature type="chain" id="PRO_0000253507" description="ATP synthase F(0) complex subunit a">
    <location>
        <begin position="1"/>
        <end position="226"/>
    </location>
</feature>
<feature type="transmembrane region" description="Helical" evidence="2">
    <location>
        <begin position="6"/>
        <end position="26"/>
    </location>
</feature>
<feature type="transmembrane region" description="Helical" evidence="2">
    <location>
        <begin position="68"/>
        <end position="88"/>
    </location>
</feature>
<feature type="transmembrane region" description="Helical" evidence="2">
    <location>
        <begin position="97"/>
        <end position="117"/>
    </location>
</feature>
<feature type="transmembrane region" description="Helical" evidence="2">
    <location>
        <begin position="138"/>
        <end position="158"/>
    </location>
</feature>
<feature type="transmembrane region" description="Helical" evidence="2">
    <location>
        <begin position="164"/>
        <end position="184"/>
    </location>
</feature>
<feature type="transmembrane region" description="Helical" evidence="2">
    <location>
        <begin position="189"/>
        <end position="209"/>
    </location>
</feature>
<reference key="1">
    <citation type="journal article" date="2002" name="Genetics">
        <title>Coexistence of Bos taurus and B. indicus mitochondrial DNAs in nuclear transfer-derived somatic cattle clones.</title>
        <authorList>
            <person name="Steinborn R."/>
            <person name="Schinogl P."/>
            <person name="Wells D.N."/>
            <person name="Bergthaler A."/>
            <person name="Mueller M."/>
            <person name="Brem G."/>
        </authorList>
    </citation>
    <scope>NUCLEOTIDE SEQUENCE [GENOMIC DNA]</scope>
    <source>
        <strain>Isolate E1</strain>
        <strain>Isolate E4</strain>
        <strain>Isolate Elisabeth</strain>
    </source>
</reference>
<reference key="2">
    <citation type="submission" date="2002-03" db="EMBL/GenBank/DDBJ databases">
        <title>Complete sequence of the Bos indicus mitochondrial genome.</title>
        <authorList>
            <person name="Hiendleder S."/>
            <person name="Lewalski H."/>
            <person name="Wolf E."/>
        </authorList>
    </citation>
    <scope>NUCLEOTIDE SEQUENCE [GENOMIC DNA]</scope>
    <source>
        <tissue>Liver</tissue>
    </source>
</reference>
<reference key="3">
    <citation type="submission" date="2002-06" db="EMBL/GenBank/DDBJ databases">
        <title>The complete mitochondrial genome nucleotide sequence of Bos indicus.</title>
        <authorList>
            <person name="Miretti M.M."/>
            <person name="Pereira H.A. Jr."/>
            <person name="Greggio C."/>
            <person name="Suzuki J. Jr."/>
            <person name="Ferro J.A."/>
            <person name="Ferro M.I."/>
            <person name="Meirelles F."/>
            <person name="Garcia J.M."/>
            <person name="Smith L.C."/>
        </authorList>
    </citation>
    <scope>NUCLEOTIDE SEQUENCE [GENOMIC DNA]</scope>
</reference>